<protein>
    <recommendedName>
        <fullName evidence="1">Maltose/maltodextrin import ATP-binding protein MalK</fullName>
        <ecNumber evidence="1">7.5.2.1</ecNumber>
    </recommendedName>
</protein>
<proteinExistence type="inferred from homology"/>
<name>MALK_PHOPR</name>
<accession>Q6LK87</accession>
<sequence length="369" mass="41044">MTSVTLRNVCKAYGDNLISKNVDLEIAEGEFVVFVGPSGCGKSTLLRCIAGLEDITSGDLYFGKERMNDVPPSDRGVGMVFQSYALYPHLNLFDNMSFGMKLAKADKSEIKKRVNNAADILQLGHLLERQPKSLSGGQRQRVAIGRTIVSQPNVFLLDEPLSNLDAALRVQMRIEIAKLHKQLGCTMIYVTHDQVEAMTMAEKIVVLDGGYVSQVGKPLELYHYPQNRFVAGFIGSPKMNFMSVFIEQVEDERVMVQTADGKAFWIPVDGTTVTKGDRMSLGIRPEHLVSAEEGDTSIEGTVQVVEKLGYETQVYIHLDHVDADFIYRRPDTLQVEAGDSFKVGIPAHRCHLFHSDGRACRRLYQEAGI</sequence>
<gene>
    <name evidence="1" type="primary">malK</name>
    <name type="ordered locus">PBPRB0420</name>
</gene>
<comment type="function">
    <text evidence="1">Part of the ABC transporter complex MalEFGK involved in maltose/maltodextrin import. Responsible for energy coupling to the transport system.</text>
</comment>
<comment type="catalytic activity">
    <reaction evidence="1">
        <text>D-maltose(out) + ATP + H2O = D-maltose(in) + ADP + phosphate + H(+)</text>
        <dbReference type="Rhea" id="RHEA:22132"/>
        <dbReference type="ChEBI" id="CHEBI:15377"/>
        <dbReference type="ChEBI" id="CHEBI:15378"/>
        <dbReference type="ChEBI" id="CHEBI:17306"/>
        <dbReference type="ChEBI" id="CHEBI:30616"/>
        <dbReference type="ChEBI" id="CHEBI:43474"/>
        <dbReference type="ChEBI" id="CHEBI:456216"/>
        <dbReference type="EC" id="7.5.2.1"/>
    </reaction>
</comment>
<comment type="subunit">
    <text evidence="1">The complex is composed of two ATP-binding proteins (MalK), two transmembrane proteins (MalG and MalK) and a solute-binding protein (MalE).</text>
</comment>
<comment type="subcellular location">
    <subcellularLocation>
        <location evidence="1">Cell inner membrane</location>
        <topology evidence="1">Peripheral membrane protein</topology>
    </subcellularLocation>
</comment>
<comment type="similarity">
    <text evidence="1">Belongs to the ABC transporter superfamily. Maltooligosaccharide importer (TC 3.A.1.1.1) family.</text>
</comment>
<comment type="sequence caution" evidence="2">
    <conflict type="erroneous initiation">
        <sequence resource="EMBL-CDS" id="CAG22293"/>
    </conflict>
</comment>
<reference key="1">
    <citation type="journal article" date="2005" name="Science">
        <title>Life at depth: Photobacterium profundum genome sequence and expression analysis.</title>
        <authorList>
            <person name="Vezzi A."/>
            <person name="Campanaro S."/>
            <person name="D'Angelo M."/>
            <person name="Simonato F."/>
            <person name="Vitulo N."/>
            <person name="Lauro F.M."/>
            <person name="Cestaro A."/>
            <person name="Malacrida G."/>
            <person name="Simionati B."/>
            <person name="Cannata N."/>
            <person name="Romualdi C."/>
            <person name="Bartlett D.H."/>
            <person name="Valle G."/>
        </authorList>
    </citation>
    <scope>NUCLEOTIDE SEQUENCE [LARGE SCALE GENOMIC DNA]</scope>
    <source>
        <strain>ATCC BAA-1253 / SS9</strain>
    </source>
</reference>
<evidence type="ECO:0000255" key="1">
    <source>
        <dbReference type="HAMAP-Rule" id="MF_01709"/>
    </source>
</evidence>
<evidence type="ECO:0000305" key="2"/>
<dbReference type="EC" id="7.5.2.1" evidence="1"/>
<dbReference type="EMBL" id="CR378676">
    <property type="protein sequence ID" value="CAG22293.1"/>
    <property type="status" value="ALT_INIT"/>
    <property type="molecule type" value="Genomic_DNA"/>
</dbReference>
<dbReference type="RefSeq" id="WP_041394950.1">
    <property type="nucleotide sequence ID" value="NC_006371.1"/>
</dbReference>
<dbReference type="SMR" id="Q6LK87"/>
<dbReference type="STRING" id="298386.PBPRB0420"/>
<dbReference type="KEGG" id="ppr:PBPRB0420"/>
<dbReference type="eggNOG" id="COG3842">
    <property type="taxonomic scope" value="Bacteria"/>
</dbReference>
<dbReference type="HOGENOM" id="CLU_000604_1_1_6"/>
<dbReference type="Proteomes" id="UP000000593">
    <property type="component" value="Chromosome 2"/>
</dbReference>
<dbReference type="GO" id="GO:0055052">
    <property type="term" value="C:ATP-binding cassette (ABC) transporter complex, substrate-binding subunit-containing"/>
    <property type="evidence" value="ECO:0007669"/>
    <property type="project" value="TreeGrafter"/>
</dbReference>
<dbReference type="GO" id="GO:1990060">
    <property type="term" value="C:maltose transport complex"/>
    <property type="evidence" value="ECO:0007669"/>
    <property type="project" value="TreeGrafter"/>
</dbReference>
<dbReference type="GO" id="GO:0015423">
    <property type="term" value="F:ABC-type maltose transporter activity"/>
    <property type="evidence" value="ECO:0007669"/>
    <property type="project" value="UniProtKB-EC"/>
</dbReference>
<dbReference type="GO" id="GO:0005524">
    <property type="term" value="F:ATP binding"/>
    <property type="evidence" value="ECO:0007669"/>
    <property type="project" value="UniProtKB-KW"/>
</dbReference>
<dbReference type="GO" id="GO:0016887">
    <property type="term" value="F:ATP hydrolysis activity"/>
    <property type="evidence" value="ECO:0007669"/>
    <property type="project" value="InterPro"/>
</dbReference>
<dbReference type="CDD" id="cd03301">
    <property type="entry name" value="ABC_MalK_N"/>
    <property type="match status" value="1"/>
</dbReference>
<dbReference type="FunFam" id="3.40.50.300:FF:000042">
    <property type="entry name" value="Maltose/maltodextrin ABC transporter, ATP-binding protein"/>
    <property type="match status" value="1"/>
</dbReference>
<dbReference type="Gene3D" id="2.40.50.100">
    <property type="match status" value="1"/>
</dbReference>
<dbReference type="Gene3D" id="2.40.50.140">
    <property type="entry name" value="Nucleic acid-binding proteins"/>
    <property type="match status" value="1"/>
</dbReference>
<dbReference type="Gene3D" id="3.40.50.300">
    <property type="entry name" value="P-loop containing nucleotide triphosphate hydrolases"/>
    <property type="match status" value="1"/>
</dbReference>
<dbReference type="InterPro" id="IPR003593">
    <property type="entry name" value="AAA+_ATPase"/>
</dbReference>
<dbReference type="InterPro" id="IPR003439">
    <property type="entry name" value="ABC_transporter-like_ATP-bd"/>
</dbReference>
<dbReference type="InterPro" id="IPR017871">
    <property type="entry name" value="ABC_transporter-like_CS"/>
</dbReference>
<dbReference type="InterPro" id="IPR015855">
    <property type="entry name" value="ABC_transpr_MalK-like"/>
</dbReference>
<dbReference type="InterPro" id="IPR047641">
    <property type="entry name" value="ABC_transpr_MalK/UgpC-like"/>
</dbReference>
<dbReference type="InterPro" id="IPR008995">
    <property type="entry name" value="Mo/tungstate-bd_C_term_dom"/>
</dbReference>
<dbReference type="InterPro" id="IPR012340">
    <property type="entry name" value="NA-bd_OB-fold"/>
</dbReference>
<dbReference type="InterPro" id="IPR027417">
    <property type="entry name" value="P-loop_NTPase"/>
</dbReference>
<dbReference type="InterPro" id="IPR013611">
    <property type="entry name" value="Transp-assoc_OB_typ2"/>
</dbReference>
<dbReference type="NCBIfam" id="NF008233">
    <property type="entry name" value="PRK11000.1"/>
    <property type="match status" value="1"/>
</dbReference>
<dbReference type="NCBIfam" id="NF008653">
    <property type="entry name" value="PRK11650.1"/>
    <property type="match status" value="1"/>
</dbReference>
<dbReference type="PANTHER" id="PTHR43875">
    <property type="entry name" value="MALTODEXTRIN IMPORT ATP-BINDING PROTEIN MSMX"/>
    <property type="match status" value="1"/>
</dbReference>
<dbReference type="PANTHER" id="PTHR43875:SF3">
    <property type="entry name" value="MALTOSE_MALTODEXTRIN IMPORT ATP-BINDING PROTEIN MALK"/>
    <property type="match status" value="1"/>
</dbReference>
<dbReference type="Pfam" id="PF00005">
    <property type="entry name" value="ABC_tran"/>
    <property type="match status" value="1"/>
</dbReference>
<dbReference type="Pfam" id="PF08402">
    <property type="entry name" value="TOBE_2"/>
    <property type="match status" value="1"/>
</dbReference>
<dbReference type="SMART" id="SM00382">
    <property type="entry name" value="AAA"/>
    <property type="match status" value="1"/>
</dbReference>
<dbReference type="SUPFAM" id="SSF50331">
    <property type="entry name" value="MOP-like"/>
    <property type="match status" value="1"/>
</dbReference>
<dbReference type="SUPFAM" id="SSF52540">
    <property type="entry name" value="P-loop containing nucleoside triphosphate hydrolases"/>
    <property type="match status" value="1"/>
</dbReference>
<dbReference type="PROSITE" id="PS00211">
    <property type="entry name" value="ABC_TRANSPORTER_1"/>
    <property type="match status" value="1"/>
</dbReference>
<dbReference type="PROSITE" id="PS50893">
    <property type="entry name" value="ABC_TRANSPORTER_2"/>
    <property type="match status" value="1"/>
</dbReference>
<dbReference type="PROSITE" id="PS51245">
    <property type="entry name" value="MALK"/>
    <property type="match status" value="1"/>
</dbReference>
<organism>
    <name type="scientific">Photobacterium profundum (strain SS9)</name>
    <dbReference type="NCBI Taxonomy" id="298386"/>
    <lineage>
        <taxon>Bacteria</taxon>
        <taxon>Pseudomonadati</taxon>
        <taxon>Pseudomonadota</taxon>
        <taxon>Gammaproteobacteria</taxon>
        <taxon>Vibrionales</taxon>
        <taxon>Vibrionaceae</taxon>
        <taxon>Photobacterium</taxon>
    </lineage>
</organism>
<keyword id="KW-0067">ATP-binding</keyword>
<keyword id="KW-0997">Cell inner membrane</keyword>
<keyword id="KW-1003">Cell membrane</keyword>
<keyword id="KW-0472">Membrane</keyword>
<keyword id="KW-0547">Nucleotide-binding</keyword>
<keyword id="KW-1185">Reference proteome</keyword>
<keyword id="KW-0762">Sugar transport</keyword>
<keyword id="KW-1278">Translocase</keyword>
<keyword id="KW-0813">Transport</keyword>
<feature type="chain" id="PRO_0000273996" description="Maltose/maltodextrin import ATP-binding protein MalK">
    <location>
        <begin position="1"/>
        <end position="369"/>
    </location>
</feature>
<feature type="domain" description="ABC transporter" evidence="1">
    <location>
        <begin position="4"/>
        <end position="234"/>
    </location>
</feature>
<feature type="binding site" evidence="1">
    <location>
        <begin position="36"/>
        <end position="43"/>
    </location>
    <ligand>
        <name>ATP</name>
        <dbReference type="ChEBI" id="CHEBI:30616"/>
    </ligand>
</feature>